<proteinExistence type="inferred from homology"/>
<gene>
    <name type="primary">nodD3</name>
    <name type="ordered locus">mlr6182</name>
</gene>
<evidence type="ECO:0000255" key="1">
    <source>
        <dbReference type="PROSITE-ProRule" id="PRU00253"/>
    </source>
</evidence>
<evidence type="ECO:0000305" key="2"/>
<organism>
    <name type="scientific">Mesorhizobium japonicum (strain LMG 29417 / CECT 9101 / MAFF 303099)</name>
    <name type="common">Mesorhizobium loti (strain MAFF 303099)</name>
    <dbReference type="NCBI Taxonomy" id="266835"/>
    <lineage>
        <taxon>Bacteria</taxon>
        <taxon>Pseudomonadati</taxon>
        <taxon>Pseudomonadota</taxon>
        <taxon>Alphaproteobacteria</taxon>
        <taxon>Hyphomicrobiales</taxon>
        <taxon>Phyllobacteriaceae</taxon>
        <taxon>Mesorhizobium</taxon>
    </lineage>
</organism>
<reference key="1">
    <citation type="journal article" date="1996" name="Mol. Plant Microbe Interact.">
        <title>Novel and complex chromosomal arrangement of Rhizobium loti nodulation genes.</title>
        <authorList>
            <person name="Scott D.B."/>
            <person name="Young C.A."/>
            <person name="Collins-Emerson J.M."/>
            <person name="Terzaghi E.A."/>
            <person name="Rockman E.S."/>
            <person name="Lewis P.E."/>
            <person name="Pankhurst C.E."/>
        </authorList>
    </citation>
    <scope>NUCLEOTIDE SEQUENCE [GENOMIC DNA]</scope>
    <source>
        <strain>NZP 2213</strain>
    </source>
</reference>
<reference key="2">
    <citation type="journal article" date="2000" name="DNA Res.">
        <title>Complete genome structure of the nitrogen-fixing symbiotic bacterium Mesorhizobium loti.</title>
        <authorList>
            <person name="Kaneko T."/>
            <person name="Nakamura Y."/>
            <person name="Sato S."/>
            <person name="Asamizu E."/>
            <person name="Kato T."/>
            <person name="Sasamoto S."/>
            <person name="Watanabe A."/>
            <person name="Idesawa K."/>
            <person name="Ishikawa A."/>
            <person name="Kawashima K."/>
            <person name="Kimura T."/>
            <person name="Kishida Y."/>
            <person name="Kiyokawa C."/>
            <person name="Kohara M."/>
            <person name="Matsumoto M."/>
            <person name="Matsuno A."/>
            <person name="Mochizuki Y."/>
            <person name="Nakayama S."/>
            <person name="Nakazaki N."/>
            <person name="Shimpo S."/>
            <person name="Sugimoto M."/>
            <person name="Takeuchi C."/>
            <person name="Yamada M."/>
            <person name="Tabata S."/>
        </authorList>
    </citation>
    <scope>NUCLEOTIDE SEQUENCE [LARGE SCALE GENOMIC DNA]</scope>
    <source>
        <strain>LMG 29417 / CECT 9101 / MAFF 303099</strain>
    </source>
</reference>
<keyword id="KW-0010">Activator</keyword>
<keyword id="KW-0238">DNA-binding</keyword>
<keyword id="KW-0536">Nodulation</keyword>
<keyword id="KW-0678">Repressor</keyword>
<keyword id="KW-0804">Transcription</keyword>
<keyword id="KW-0805">Transcription regulation</keyword>
<sequence length="301" mass="34224">MRFKGLDLNLLVVLDALLTARNLTAAASSINLSQPAMSAAVARLRNYFNDELFTMSGRERVLTPRAETLAPAVRGALLHIQCSIISWDPFNPAQSDRRFRIILSDFATLVFFEKVVERVAREAPAVSFELRPLDNDPDELLRRGDVDFVILPEFFMSSAHPRAALFDETFVCVGCPTNKQLPRQLTFERYVSMKHIAFRVGGAQMPSIEEQFLLEHGLKRRVEIVVQAFSMIPPMVSGTARIATMPFRLVQHFKKTFPLRIIELPRPLPTFTEAVQWPTLHNSDPASIWMRQIMLQEASRM</sequence>
<accession>Q52779</accession>
<name>NODD3_RHILO</name>
<feature type="chain" id="PRO_0000105711" description="Nodulation protein D 3">
    <location>
        <begin position="1"/>
        <end position="301"/>
    </location>
</feature>
<feature type="domain" description="HTH lysR-type" evidence="1">
    <location>
        <begin position="6"/>
        <end position="63"/>
    </location>
</feature>
<feature type="DNA-binding region" description="H-T-H motif" evidence="1">
    <location>
        <begin position="23"/>
        <end position="43"/>
    </location>
</feature>
<feature type="sequence conflict" description="In Ref. 1; AAB50274." evidence="2" ref="1">
    <original>N</original>
    <variation>H</variation>
    <location>
        <position position="135"/>
    </location>
</feature>
<feature type="sequence conflict" description="In Ref. 1; AAB50274." evidence="2" ref="1">
    <original>V</original>
    <variation>L</variation>
    <location>
        <position position="149"/>
    </location>
</feature>
<feature type="sequence conflict" description="In Ref. 1; AAB50274." evidence="2" ref="1">
    <original>Q</original>
    <variation>E</variation>
    <location>
        <position position="180"/>
    </location>
</feature>
<protein>
    <recommendedName>
        <fullName>Nodulation protein D 3</fullName>
    </recommendedName>
</protein>
<comment type="function">
    <text>NodD regulates the expression of the nodABCFE genes which encode other nodulation proteins. NodD is also a negative regulator of its own expression. Binds flavonoids as inducers.</text>
</comment>
<comment type="similarity">
    <text evidence="2">Belongs to the LysR transcriptional regulatory family.</text>
</comment>
<dbReference type="EMBL" id="U22899">
    <property type="protein sequence ID" value="AAB50274.1"/>
    <property type="molecule type" value="Genomic_DNA"/>
</dbReference>
<dbReference type="EMBL" id="BA000012">
    <property type="protein sequence ID" value="BAB52515.1"/>
    <property type="molecule type" value="Genomic_DNA"/>
</dbReference>
<dbReference type="PIR" id="S21410">
    <property type="entry name" value="S21410"/>
</dbReference>
<dbReference type="RefSeq" id="WP_010913836.1">
    <property type="nucleotide sequence ID" value="NC_002678.2"/>
</dbReference>
<dbReference type="SMR" id="Q52779"/>
<dbReference type="KEGG" id="mlo:mlr6182"/>
<dbReference type="eggNOG" id="COG0583">
    <property type="taxonomic scope" value="Bacteria"/>
</dbReference>
<dbReference type="HOGENOM" id="CLU_039613_39_0_5"/>
<dbReference type="Proteomes" id="UP000000552">
    <property type="component" value="Chromosome"/>
</dbReference>
<dbReference type="GO" id="GO:0003677">
    <property type="term" value="F:DNA binding"/>
    <property type="evidence" value="ECO:0007669"/>
    <property type="project" value="UniProtKB-KW"/>
</dbReference>
<dbReference type="GO" id="GO:0003700">
    <property type="term" value="F:DNA-binding transcription factor activity"/>
    <property type="evidence" value="ECO:0007669"/>
    <property type="project" value="InterPro"/>
</dbReference>
<dbReference type="CDD" id="cd08462">
    <property type="entry name" value="PBP2_NodD"/>
    <property type="match status" value="1"/>
</dbReference>
<dbReference type="Gene3D" id="3.40.190.10">
    <property type="entry name" value="Periplasmic binding protein-like II"/>
    <property type="match status" value="2"/>
</dbReference>
<dbReference type="Gene3D" id="1.10.10.10">
    <property type="entry name" value="Winged helix-like DNA-binding domain superfamily/Winged helix DNA-binding domain"/>
    <property type="match status" value="1"/>
</dbReference>
<dbReference type="InterPro" id="IPR050389">
    <property type="entry name" value="LysR-type_TF"/>
</dbReference>
<dbReference type="InterPro" id="IPR005119">
    <property type="entry name" value="LysR_subst-bd"/>
</dbReference>
<dbReference type="InterPro" id="IPR037416">
    <property type="entry name" value="NodD_PBP2"/>
</dbReference>
<dbReference type="InterPro" id="IPR000847">
    <property type="entry name" value="Tscrpt_reg_HTH_LysR"/>
</dbReference>
<dbReference type="InterPro" id="IPR036388">
    <property type="entry name" value="WH-like_DNA-bd_sf"/>
</dbReference>
<dbReference type="InterPro" id="IPR036390">
    <property type="entry name" value="WH_DNA-bd_sf"/>
</dbReference>
<dbReference type="PANTHER" id="PTHR30118:SF6">
    <property type="entry name" value="HTH-TYPE TRANSCRIPTIONAL REGULATOR LEUO"/>
    <property type="match status" value="1"/>
</dbReference>
<dbReference type="PANTHER" id="PTHR30118">
    <property type="entry name" value="HTH-TYPE TRANSCRIPTIONAL REGULATOR LEUO-RELATED"/>
    <property type="match status" value="1"/>
</dbReference>
<dbReference type="Pfam" id="PF00126">
    <property type="entry name" value="HTH_1"/>
    <property type="match status" value="1"/>
</dbReference>
<dbReference type="Pfam" id="PF03466">
    <property type="entry name" value="LysR_substrate"/>
    <property type="match status" value="1"/>
</dbReference>
<dbReference type="PRINTS" id="PR00039">
    <property type="entry name" value="HTHLYSR"/>
</dbReference>
<dbReference type="SUPFAM" id="SSF53850">
    <property type="entry name" value="Periplasmic binding protein-like II"/>
    <property type="match status" value="1"/>
</dbReference>
<dbReference type="SUPFAM" id="SSF46785">
    <property type="entry name" value="Winged helix' DNA-binding domain"/>
    <property type="match status" value="1"/>
</dbReference>
<dbReference type="PROSITE" id="PS50931">
    <property type="entry name" value="HTH_LYSR"/>
    <property type="match status" value="1"/>
</dbReference>